<evidence type="ECO:0000255" key="1">
    <source>
        <dbReference type="HAMAP-Rule" id="MF_04073"/>
    </source>
</evidence>
<evidence type="ECO:0000256" key="2">
    <source>
        <dbReference type="SAM" id="MobiDB-lite"/>
    </source>
</evidence>
<sequence>MHPFYQLFRNIQSLGEEEVQELLGPPEDALPLLAGEGLNHRVADALNLQLPTADLEWIHKTNVITGLYSTQTEKFNCNWKQPVFPKIHLDNNLFQKLENYFGPLTTNEKRRLKLVFPARFFPNATKYFPLLKGIKDKYPNYTIEHFFAAANYLWTLWESGILYLRKNQTTLTFRGKPYSWEHRQLEQHNGQQHKSNIRSQQISCMVANSGNLLYTHYHRDKSSNIQTRNLSDNVFKKSKESTRVRCYTYDKIQRNRLGQLARIPCESKAPSEQQQSSLRSKGRDFRNQIQAYNSSRNKGYTTWHSTTSDSIQSGSKKKTHTSNSSFERHTPSFDNEKSDRSPAGICRGTESSNHLRSSQLCLWRSFYYTKPCGTYCLHHIVSSIDDWGPCTFDGDVTIRSPRTPRRITGGIFLVDKNPYNSSESRLVVDFSQFSRGHSRVHWPKFAVPNLQTLANLLSTNLQWLSLDVSAAFYHIPVSPAAVPHFLVGSPGLERFASCMSHDASNRNNSKLQTMHHICSRHLYNTLLLLFKTYGRKLHLLAHPFIMGFRKLPMGVGLSPFLLAQFTSALTSMVRRNFPHCLAFAYMDDLVLGARSYEHLTAVYSHICSVFLDLGIHLNVEKTKWWGHTLHFMGYTINGAGVLPQDKHVHKVTTYLKSIPINQPLDYKICERLTGILNYVAPFTKCGYAALLPLYQAIASHTAFVFSSLYKNWLLSLYGELWPVARQRGVVCSVFADATPTGWGICTTCQLISGTFGFSLPIATAELIAACLARCWTGARLLGTDNSVVLSGKLTSFPWLLACVANWILRGTSFCYVPSADNPADLPSRGLLPALRPLPLLRFRPVTKRISLWAASPPVSTRRPVRVAWASPVQTCEPWIPP</sequence>
<organism>
    <name type="scientific">Ground squirrel hepatitis virus (strain 27)</name>
    <name type="common">GSHV</name>
    <dbReference type="NCBI Taxonomy" id="10406"/>
    <lineage>
        <taxon>Viruses</taxon>
        <taxon>Riboviria</taxon>
        <taxon>Pararnavirae</taxon>
        <taxon>Artverviricota</taxon>
        <taxon>Revtraviricetes</taxon>
        <taxon>Blubervirales</taxon>
        <taxon>Hepadnaviridae</taxon>
        <taxon>Orthohepadnavirus</taxon>
    </lineage>
</organism>
<reference key="1">
    <citation type="journal article" date="1984" name="J. Virol.">
        <title>Nucleotide sequence of an infectious molecularly cloned genome of ground squirrel hepatitis virus.</title>
        <authorList>
            <person name="Seeger C."/>
            <person name="Ganem D."/>
            <person name="Varmus H.E."/>
        </authorList>
    </citation>
    <scope>NUCLEOTIDE SEQUENCE [GENOMIC DNA]</scope>
</reference>
<reference key="2">
    <citation type="journal article" date="2007" name="World J. Gastroenterol.">
        <title>Hepatitis B virus replication.</title>
        <authorList>
            <person name="Beck J."/>
            <person name="Nassal M."/>
        </authorList>
    </citation>
    <scope>REVIEW</scope>
</reference>
<proteinExistence type="inferred from homology"/>
<dbReference type="EC" id="2.7.7.7" evidence="1"/>
<dbReference type="EC" id="2.7.7.49" evidence="1"/>
<dbReference type="EC" id="3.1.26.4" evidence="1"/>
<dbReference type="EMBL" id="K02715">
    <property type="protein sequence ID" value="AAA46756.1"/>
    <property type="molecule type" value="Genomic_DNA"/>
</dbReference>
<dbReference type="PIR" id="A00709">
    <property type="entry name" value="JDVLS"/>
</dbReference>
<dbReference type="RefSeq" id="NP_040994.1">
    <property type="nucleotide sequence ID" value="NC_001484.1"/>
</dbReference>
<dbReference type="KEGG" id="vg:1488459"/>
<dbReference type="OrthoDB" id="1824at10239"/>
<dbReference type="Proteomes" id="UP000009156">
    <property type="component" value="Genome"/>
</dbReference>
<dbReference type="GO" id="GO:0003677">
    <property type="term" value="F:DNA binding"/>
    <property type="evidence" value="ECO:0007669"/>
    <property type="project" value="UniProtKB-UniRule"/>
</dbReference>
<dbReference type="GO" id="GO:0003887">
    <property type="term" value="F:DNA-directed DNA polymerase activity"/>
    <property type="evidence" value="ECO:0007669"/>
    <property type="project" value="UniProtKB-UniRule"/>
</dbReference>
<dbReference type="GO" id="GO:0046872">
    <property type="term" value="F:metal ion binding"/>
    <property type="evidence" value="ECO:0007669"/>
    <property type="project" value="UniProtKB-UniRule"/>
</dbReference>
<dbReference type="GO" id="GO:0003964">
    <property type="term" value="F:RNA-directed DNA polymerase activity"/>
    <property type="evidence" value="ECO:0007669"/>
    <property type="project" value="UniProtKB-UniRule"/>
</dbReference>
<dbReference type="GO" id="GO:0004523">
    <property type="term" value="F:RNA-DNA hybrid ribonuclease activity"/>
    <property type="evidence" value="ECO:0007669"/>
    <property type="project" value="UniProtKB-UniRule"/>
</dbReference>
<dbReference type="GO" id="GO:0006260">
    <property type="term" value="P:DNA replication"/>
    <property type="evidence" value="ECO:0007669"/>
    <property type="project" value="UniProtKB-UniRule"/>
</dbReference>
<dbReference type="GO" id="GO:0052170">
    <property type="term" value="P:symbiont-mediated suppression of host innate immune response"/>
    <property type="evidence" value="ECO:0007669"/>
    <property type="project" value="UniProtKB-UniRule"/>
</dbReference>
<dbReference type="Gene3D" id="3.30.70.270">
    <property type="match status" value="1"/>
</dbReference>
<dbReference type="HAMAP" id="MF_04073">
    <property type="entry name" value="HBV_DPOL"/>
    <property type="match status" value="1"/>
</dbReference>
<dbReference type="InterPro" id="IPR043502">
    <property type="entry name" value="DNA/RNA_pol_sf"/>
</dbReference>
<dbReference type="InterPro" id="IPR001462">
    <property type="entry name" value="DNApol_viral_C"/>
</dbReference>
<dbReference type="InterPro" id="IPR000201">
    <property type="entry name" value="DNApol_viral_N"/>
</dbReference>
<dbReference type="InterPro" id="IPR037531">
    <property type="entry name" value="HBV_DPOL"/>
</dbReference>
<dbReference type="InterPro" id="IPR052055">
    <property type="entry name" value="Hepadnavirus_pol/RT"/>
</dbReference>
<dbReference type="InterPro" id="IPR043128">
    <property type="entry name" value="Rev_trsase/Diguanyl_cyclase"/>
</dbReference>
<dbReference type="InterPro" id="IPR000477">
    <property type="entry name" value="RT_dom"/>
</dbReference>
<dbReference type="PANTHER" id="PTHR33050">
    <property type="entry name" value="REVERSE TRANSCRIPTASE DOMAIN-CONTAINING PROTEIN"/>
    <property type="match status" value="1"/>
</dbReference>
<dbReference type="PANTHER" id="PTHR33050:SF7">
    <property type="entry name" value="RIBONUCLEASE H"/>
    <property type="match status" value="1"/>
</dbReference>
<dbReference type="Pfam" id="PF00336">
    <property type="entry name" value="DNA_pol_viral_C"/>
    <property type="match status" value="1"/>
</dbReference>
<dbReference type="Pfam" id="PF00242">
    <property type="entry name" value="DNA_pol_viral_N"/>
    <property type="match status" value="1"/>
</dbReference>
<dbReference type="Pfam" id="PF00078">
    <property type="entry name" value="RVT_1"/>
    <property type="match status" value="1"/>
</dbReference>
<dbReference type="SUPFAM" id="SSF56672">
    <property type="entry name" value="DNA/RNA polymerases"/>
    <property type="match status" value="1"/>
</dbReference>
<dbReference type="PROSITE" id="PS50878">
    <property type="entry name" value="RT_POL"/>
    <property type="match status" value="1"/>
</dbReference>
<feature type="chain" id="PRO_0000222331" description="Protein P">
    <location>
        <begin position="1"/>
        <end position="881"/>
    </location>
</feature>
<feature type="domain" description="Reverse transcriptase" evidence="1">
    <location>
        <begin position="395"/>
        <end position="636"/>
    </location>
</feature>
<feature type="region of interest" description="Terminal protein domain (TP)" evidence="1">
    <location>
        <begin position="1"/>
        <end position="184"/>
    </location>
</feature>
<feature type="region of interest" description="Spacer" evidence="1">
    <location>
        <begin position="185"/>
        <end position="384"/>
    </location>
</feature>
<feature type="region of interest" description="Disordered" evidence="2">
    <location>
        <begin position="263"/>
        <end position="351"/>
    </location>
</feature>
<feature type="region of interest" description="Polymerase/reverse transcriptase domain (RT)" evidence="1">
    <location>
        <begin position="385"/>
        <end position="726"/>
    </location>
</feature>
<feature type="compositionally biased region" description="Polar residues" evidence="2">
    <location>
        <begin position="270"/>
        <end position="279"/>
    </location>
</feature>
<feature type="compositionally biased region" description="Polar residues" evidence="2">
    <location>
        <begin position="287"/>
        <end position="314"/>
    </location>
</feature>
<feature type="compositionally biased region" description="Basic and acidic residues" evidence="2">
    <location>
        <begin position="326"/>
        <end position="340"/>
    </location>
</feature>
<feature type="binding site" evidence="1">
    <location>
        <position position="467"/>
    </location>
    <ligand>
        <name>Mg(2+)</name>
        <dbReference type="ChEBI" id="CHEBI:18420"/>
        <note>catalytic</note>
    </ligand>
</feature>
<feature type="binding site" evidence="1">
    <location>
        <position position="587"/>
    </location>
    <ligand>
        <name>Mg(2+)</name>
        <dbReference type="ChEBI" id="CHEBI:18420"/>
        <note>catalytic</note>
    </ligand>
</feature>
<feature type="binding site" evidence="1">
    <location>
        <position position="588"/>
    </location>
    <ligand>
        <name>Mg(2+)</name>
        <dbReference type="ChEBI" id="CHEBI:18420"/>
        <note>catalytic</note>
    </ligand>
</feature>
<feature type="site" description="Priming of reverse-transcription by covalently linking the first nucleotide of the (-)DNA" evidence="1">
    <location>
        <position position="68"/>
    </location>
</feature>
<gene>
    <name evidence="1" type="primary">P</name>
</gene>
<keyword id="KW-0235">DNA replication</keyword>
<keyword id="KW-0238">DNA-binding</keyword>
<keyword id="KW-0239">DNA-directed DNA polymerase</keyword>
<keyword id="KW-0255">Endonuclease</keyword>
<keyword id="KW-0945">Host-virus interaction</keyword>
<keyword id="KW-0378">Hydrolase</keyword>
<keyword id="KW-1090">Inhibition of host innate immune response by virus</keyword>
<keyword id="KW-1113">Inhibition of host RLR pathway by virus</keyword>
<keyword id="KW-0460">Magnesium</keyword>
<keyword id="KW-0479">Metal-binding</keyword>
<keyword id="KW-0511">Multifunctional enzyme</keyword>
<keyword id="KW-0540">Nuclease</keyword>
<keyword id="KW-0548">Nucleotidyltransferase</keyword>
<keyword id="KW-0695">RNA-directed DNA polymerase</keyword>
<keyword id="KW-0808">Transferase</keyword>
<keyword id="KW-0899">Viral immunoevasion</keyword>
<accession>P03161</accession>
<organismHost>
    <name type="scientific">Otospermophilus beecheyi</name>
    <name type="common">California ground squirrel</name>
    <name type="synonym">Spermophilus beecheyi</name>
    <dbReference type="NCBI Taxonomy" id="34862"/>
</organismHost>
<comment type="function">
    <text evidence="1">Multifunctional enzyme that converts the viral RNA genome into dsDNA in viral cytoplasmic capsids. This enzyme displays a DNA polymerase activity that can copy either DNA or RNA templates, and a ribonuclease H (RNase H) activity that cleaves the RNA strand of RNA-DNA heteroduplexes in a partially processive 3'- to 5'-endonucleasic mode. Neo-synthesized pregenomic RNA (pgRNA) are encapsidated together with the P protein, and reverse-transcribed inside the nucleocapsid. Initiation of reverse-transcription occurs first by binding the epsilon loop on the pgRNA genome, and is initiated by protein priming, thereby the 5'-end of (-)DNA is covalently linked to P protein. Partial (+)DNA is synthesized from the (-)DNA template and generates the relaxed circular DNA (RC-DNA) genome. After budding and infection, the RC-DNA migrates in the nucleus, and is converted into a plasmid-like covalently closed circular DNA (cccDNA). The activity of P protein does not seem to be necessary for cccDNA generation, and is presumably released from (+)DNA by host nuclear DNA repair machinery.</text>
</comment>
<comment type="catalytic activity">
    <reaction evidence="1">
        <text>DNA(n) + a 2'-deoxyribonucleoside 5'-triphosphate = DNA(n+1) + diphosphate</text>
        <dbReference type="Rhea" id="RHEA:22508"/>
        <dbReference type="Rhea" id="RHEA-COMP:17339"/>
        <dbReference type="Rhea" id="RHEA-COMP:17340"/>
        <dbReference type="ChEBI" id="CHEBI:33019"/>
        <dbReference type="ChEBI" id="CHEBI:61560"/>
        <dbReference type="ChEBI" id="CHEBI:173112"/>
        <dbReference type="EC" id="2.7.7.7"/>
    </reaction>
</comment>
<comment type="catalytic activity">
    <reaction evidence="1">
        <text>DNA(n) + a 2'-deoxyribonucleoside 5'-triphosphate = DNA(n+1) + diphosphate</text>
        <dbReference type="Rhea" id="RHEA:22508"/>
        <dbReference type="Rhea" id="RHEA-COMP:17339"/>
        <dbReference type="Rhea" id="RHEA-COMP:17340"/>
        <dbReference type="ChEBI" id="CHEBI:33019"/>
        <dbReference type="ChEBI" id="CHEBI:61560"/>
        <dbReference type="ChEBI" id="CHEBI:173112"/>
        <dbReference type="EC" id="2.7.7.49"/>
    </reaction>
</comment>
<comment type="catalytic activity">
    <reaction evidence="1">
        <text>Endonucleolytic cleavage to 5'-phosphomonoester.</text>
        <dbReference type="EC" id="3.1.26.4"/>
    </reaction>
</comment>
<comment type="activity regulation">
    <text evidence="1">Activated by host HSP70 and HSP40 in vitro to be able to bind the epsilon loop of the pgRNA. Because deletion of the RNase H region renders the protein partly chaperone-independent, the chaperones may be needed indirectly to relieve occlusion of the RNA-binding site by this domain. Inhibited by several reverse-transcriptase inhibitors: Lamivudine, Adefovir and Entecavir.</text>
</comment>
<comment type="domain">
    <text evidence="1">Terminal protein domain (TP) is hepadnavirus-specific. Spacer domain is highly variable and separates the TP and RT domains. Polymerase/reverse-transcriptase domain (RT) and ribonuclease H domain (RH) are similar to retrovirus reverse transcriptase/RNase H.</text>
</comment>
<comment type="domain">
    <text evidence="1">The polymerase/reverse transcriptase (RT) and ribonuclease H (RH) domains are structured in five subdomains: finger, palm, thumb, connection and RNase H. Within the palm subdomain, the 'primer grip' region is thought to be involved in the positioning of the primer terminus for accommodating the incoming nucleotide. The RH domain stabilizes the association of RT with primer-template.</text>
</comment>
<comment type="miscellaneous">
    <text evidence="1">Hepadnaviral virions contain probably just one P protein molecule per particle.</text>
</comment>
<comment type="similarity">
    <text evidence="1">Belongs to the hepadnaviridae P protein family.</text>
</comment>
<protein>
    <recommendedName>
        <fullName evidence="1">Protein P</fullName>
    </recommendedName>
    <domain>
        <recommendedName>
            <fullName evidence="1">DNA-directed DNA polymerase</fullName>
            <ecNumber evidence="1">2.7.7.7</ecNumber>
        </recommendedName>
    </domain>
    <domain>
        <recommendedName>
            <fullName evidence="1">RNA-directed DNA polymerase</fullName>
            <ecNumber evidence="1">2.7.7.49</ecNumber>
        </recommendedName>
    </domain>
    <domain>
        <recommendedName>
            <fullName evidence="1">Ribonuclease H</fullName>
            <ecNumber evidence="1">3.1.26.4</ecNumber>
        </recommendedName>
    </domain>
</protein>
<name>DPOL_GSHV</name>